<gene>
    <name evidence="1" type="primary">prmA</name>
    <name type="ordered locus">CA_C1284</name>
</gene>
<name>PRMA_CLOAB</name>
<dbReference type="EC" id="2.1.1.-" evidence="1"/>
<dbReference type="EMBL" id="AE001437">
    <property type="protein sequence ID" value="AAK79255.1"/>
    <property type="molecule type" value="Genomic_DNA"/>
</dbReference>
<dbReference type="EMBL" id="X69050">
    <property type="protein sequence ID" value="CAA48793.1"/>
    <property type="molecule type" value="Genomic_DNA"/>
</dbReference>
<dbReference type="EMBL" id="AF036764">
    <property type="protein sequence ID" value="AAD02056.1"/>
    <property type="molecule type" value="Genomic_DNA"/>
</dbReference>
<dbReference type="PIR" id="D97058">
    <property type="entry name" value="D97058"/>
</dbReference>
<dbReference type="RefSeq" id="NP_347915.1">
    <property type="nucleotide sequence ID" value="NC_003030.1"/>
</dbReference>
<dbReference type="RefSeq" id="WP_010964596.1">
    <property type="nucleotide sequence ID" value="NC_003030.1"/>
</dbReference>
<dbReference type="SMR" id="P45558"/>
<dbReference type="STRING" id="272562.CA_C1284"/>
<dbReference type="GeneID" id="44997790"/>
<dbReference type="KEGG" id="cac:CA_C1284"/>
<dbReference type="PATRIC" id="fig|272562.8.peg.1485"/>
<dbReference type="eggNOG" id="COG2264">
    <property type="taxonomic scope" value="Bacteria"/>
</dbReference>
<dbReference type="HOGENOM" id="CLU_049382_0_1_9"/>
<dbReference type="OrthoDB" id="9785995at2"/>
<dbReference type="Proteomes" id="UP000000814">
    <property type="component" value="Chromosome"/>
</dbReference>
<dbReference type="GO" id="GO:0005737">
    <property type="term" value="C:cytoplasm"/>
    <property type="evidence" value="ECO:0007669"/>
    <property type="project" value="UniProtKB-SubCell"/>
</dbReference>
<dbReference type="GO" id="GO:0016279">
    <property type="term" value="F:protein-lysine N-methyltransferase activity"/>
    <property type="evidence" value="ECO:0007669"/>
    <property type="project" value="RHEA"/>
</dbReference>
<dbReference type="GO" id="GO:0032259">
    <property type="term" value="P:methylation"/>
    <property type="evidence" value="ECO:0007669"/>
    <property type="project" value="UniProtKB-KW"/>
</dbReference>
<dbReference type="CDD" id="cd02440">
    <property type="entry name" value="AdoMet_MTases"/>
    <property type="match status" value="1"/>
</dbReference>
<dbReference type="Gene3D" id="3.40.50.150">
    <property type="entry name" value="Vaccinia Virus protein VP39"/>
    <property type="match status" value="1"/>
</dbReference>
<dbReference type="HAMAP" id="MF_00735">
    <property type="entry name" value="Methyltr_PrmA"/>
    <property type="match status" value="1"/>
</dbReference>
<dbReference type="InterPro" id="IPR050078">
    <property type="entry name" value="Ribosomal_L11_MeTrfase_PrmA"/>
</dbReference>
<dbReference type="InterPro" id="IPR004498">
    <property type="entry name" value="Ribosomal_PrmA_MeTrfase"/>
</dbReference>
<dbReference type="InterPro" id="IPR029063">
    <property type="entry name" value="SAM-dependent_MTases_sf"/>
</dbReference>
<dbReference type="NCBIfam" id="TIGR00406">
    <property type="entry name" value="prmA"/>
    <property type="match status" value="1"/>
</dbReference>
<dbReference type="PANTHER" id="PTHR43648">
    <property type="entry name" value="ELECTRON TRANSFER FLAVOPROTEIN BETA SUBUNIT LYSINE METHYLTRANSFERASE"/>
    <property type="match status" value="1"/>
</dbReference>
<dbReference type="PANTHER" id="PTHR43648:SF1">
    <property type="entry name" value="ELECTRON TRANSFER FLAVOPROTEIN BETA SUBUNIT LYSINE METHYLTRANSFERASE"/>
    <property type="match status" value="1"/>
</dbReference>
<dbReference type="Pfam" id="PF06325">
    <property type="entry name" value="PrmA"/>
    <property type="match status" value="1"/>
</dbReference>
<dbReference type="PIRSF" id="PIRSF000401">
    <property type="entry name" value="RPL11_MTase"/>
    <property type="match status" value="1"/>
</dbReference>
<dbReference type="SUPFAM" id="SSF53335">
    <property type="entry name" value="S-adenosyl-L-methionine-dependent methyltransferases"/>
    <property type="match status" value="1"/>
</dbReference>
<protein>
    <recommendedName>
        <fullName evidence="1">Ribosomal protein L11 methyltransferase</fullName>
        <shortName evidence="1">L11 Mtase</shortName>
        <ecNumber evidence="1">2.1.1.-</ecNumber>
    </recommendedName>
</protein>
<organism>
    <name type="scientific">Clostridium acetobutylicum (strain ATCC 824 / DSM 792 / JCM 1419 / IAM 19013 / LMG 5710 / NBRC 13948 / NRRL B-527 / VKM B-1787 / 2291 / W)</name>
    <dbReference type="NCBI Taxonomy" id="272562"/>
    <lineage>
        <taxon>Bacteria</taxon>
        <taxon>Bacillati</taxon>
        <taxon>Bacillota</taxon>
        <taxon>Clostridia</taxon>
        <taxon>Eubacteriales</taxon>
        <taxon>Clostridiaceae</taxon>
        <taxon>Clostridium</taxon>
    </lineage>
</organism>
<accession>P45558</accession>
<accession>Q9ZIA3</accession>
<reference key="1">
    <citation type="journal article" date="2001" name="J. Bacteriol.">
        <title>Genome sequence and comparative analysis of the solvent-producing bacterium Clostridium acetobutylicum.</title>
        <authorList>
            <person name="Noelling J."/>
            <person name="Breton G."/>
            <person name="Omelchenko M.V."/>
            <person name="Makarova K.S."/>
            <person name="Zeng Q."/>
            <person name="Gibson R."/>
            <person name="Lee H.M."/>
            <person name="Dubois J."/>
            <person name="Qiu D."/>
            <person name="Hitti J."/>
            <person name="Wolf Y.I."/>
            <person name="Tatusov R.L."/>
            <person name="Sabathe F."/>
            <person name="Doucette-Stamm L.A."/>
            <person name="Soucaille P."/>
            <person name="Daly M.J."/>
            <person name="Bennett G.N."/>
            <person name="Koonin E.V."/>
            <person name="Smith D.R."/>
        </authorList>
    </citation>
    <scope>NUCLEOTIDE SEQUENCE [LARGE SCALE GENOMIC DNA]</scope>
    <source>
        <strain>ATCC 824 / DSM 792 / JCM 1419 / IAM 19013 / LMG 5710 / NBRC 13948 / NRRL B-527 / VKM B-1787 / 2291 / W</strain>
    </source>
</reference>
<reference key="2">
    <citation type="journal article" date="1993" name="FEMS Microbiol. Lett.">
        <title>Cloning, nucleotide sequence and structural analysis of the Clostridium acetobutylicum dnaJ gene.</title>
        <authorList>
            <person name="Behrens S."/>
            <person name="Narberhaus F."/>
            <person name="Bahl H."/>
        </authorList>
    </citation>
    <scope>NUCLEOTIDE SEQUENCE [GENOMIC DNA] OF 1-298</scope>
</reference>
<reference key="3">
    <citation type="submission" date="1996-04" db="EMBL/GenBank/DDBJ databases">
        <authorList>
            <person name="Behrens S."/>
        </authorList>
    </citation>
    <scope>SEQUENCE REVISION</scope>
</reference>
<reference key="4">
    <citation type="submission" date="1997-12" db="EMBL/GenBank/DDBJ databases">
        <authorList>
            <person name="Jacobi C.S."/>
        </authorList>
    </citation>
    <scope>NUCLEOTIDE SEQUENCE [GENOMIC DNA] OF 68-311</scope>
    <source>
        <strain>ATCC 4259 / DSM 1731 / NCIB 619</strain>
    </source>
</reference>
<sequence length="311" mass="35028">MDKDWFEVSVITSSEAVEAVTGILYNTPVKGVAIEDSKDVEFKKKHPGDWDYFDESLLNVKDGAVIKAYYKDDHNFDESVKYIEESIDKLSEFGINKGEGKVFVNKVNETDWENNWKKYYKPTKIGARIVVKPLWEEYTPKDYELMLNMDPGMAFGTGTHETTRMCIQALERYVNEDAEVFDIGTGSGILAIAAAKLNAKKVLGVDLDSVAVKAAKENIQYNNVNNIEILHGNLMEVVQGKADIIVANIIADVINILIPDINKFLKTDGYFISSGIIKDRAEDVIENLKKNKFEIIEVNNQGEWICIVAKL</sequence>
<evidence type="ECO:0000255" key="1">
    <source>
        <dbReference type="HAMAP-Rule" id="MF_00735"/>
    </source>
</evidence>
<evidence type="ECO:0000305" key="2"/>
<keyword id="KW-0963">Cytoplasm</keyword>
<keyword id="KW-0489">Methyltransferase</keyword>
<keyword id="KW-1185">Reference proteome</keyword>
<keyword id="KW-0949">S-adenosyl-L-methionine</keyword>
<keyword id="KW-0346">Stress response</keyword>
<keyword id="KW-0808">Transferase</keyword>
<comment type="function">
    <text evidence="1">Methylates ribosomal protein L11.</text>
</comment>
<comment type="catalytic activity">
    <reaction evidence="1">
        <text>L-lysyl-[protein] + 3 S-adenosyl-L-methionine = N(6),N(6),N(6)-trimethyl-L-lysyl-[protein] + 3 S-adenosyl-L-homocysteine + 3 H(+)</text>
        <dbReference type="Rhea" id="RHEA:54192"/>
        <dbReference type="Rhea" id="RHEA-COMP:9752"/>
        <dbReference type="Rhea" id="RHEA-COMP:13826"/>
        <dbReference type="ChEBI" id="CHEBI:15378"/>
        <dbReference type="ChEBI" id="CHEBI:29969"/>
        <dbReference type="ChEBI" id="CHEBI:57856"/>
        <dbReference type="ChEBI" id="CHEBI:59789"/>
        <dbReference type="ChEBI" id="CHEBI:61961"/>
    </reaction>
</comment>
<comment type="subcellular location">
    <subcellularLocation>
        <location evidence="1">Cytoplasm</location>
    </subcellularLocation>
</comment>
<comment type="induction">
    <text>By heat shock.</text>
</comment>
<comment type="similarity">
    <text evidence="1 2">Belongs to the methyltransferase superfamily. PrmA family.</text>
</comment>
<feature type="chain" id="PRO_0000192252" description="Ribosomal protein L11 methyltransferase">
    <location>
        <begin position="1"/>
        <end position="311"/>
    </location>
</feature>
<feature type="binding site" evidence="1">
    <location>
        <position position="163"/>
    </location>
    <ligand>
        <name>S-adenosyl-L-methionine</name>
        <dbReference type="ChEBI" id="CHEBI:59789"/>
    </ligand>
</feature>
<feature type="binding site" evidence="1">
    <location>
        <position position="184"/>
    </location>
    <ligand>
        <name>S-adenosyl-L-methionine</name>
        <dbReference type="ChEBI" id="CHEBI:59789"/>
    </ligand>
</feature>
<feature type="binding site" evidence="1">
    <location>
        <position position="206"/>
    </location>
    <ligand>
        <name>S-adenosyl-L-methionine</name>
        <dbReference type="ChEBI" id="CHEBI:59789"/>
    </ligand>
</feature>
<feature type="binding site" evidence="1">
    <location>
        <position position="248"/>
    </location>
    <ligand>
        <name>S-adenosyl-L-methionine</name>
        <dbReference type="ChEBI" id="CHEBI:59789"/>
    </ligand>
</feature>
<proteinExistence type="evidence at transcript level"/>